<accession>Q6G8Q5</accession>
<evidence type="ECO:0000255" key="1">
    <source>
        <dbReference type="HAMAP-Rule" id="MF_00260"/>
    </source>
</evidence>
<feature type="chain" id="PRO_0000142992" description="Porphobilinogen deaminase">
    <location>
        <begin position="1"/>
        <end position="308"/>
    </location>
</feature>
<feature type="modified residue" description="S-(dipyrrolylmethanemethyl)cysteine" evidence="1">
    <location>
        <position position="241"/>
    </location>
</feature>
<organism>
    <name type="scientific">Staphylococcus aureus (strain MSSA476)</name>
    <dbReference type="NCBI Taxonomy" id="282459"/>
    <lineage>
        <taxon>Bacteria</taxon>
        <taxon>Bacillati</taxon>
        <taxon>Bacillota</taxon>
        <taxon>Bacilli</taxon>
        <taxon>Bacillales</taxon>
        <taxon>Staphylococcaceae</taxon>
        <taxon>Staphylococcus</taxon>
    </lineage>
</organism>
<sequence>MRKLVVGSRRSKLALTQSQQFIDKLKAVEPNLEIEIKEIVTKGDRIVDKQLSKVGGKGLFVKEIQHELFEKNIDMAIHSLKDVPSVIPEGLTLGCIPDRELPFDAYISKTHTPLSQLPEGSIIGTSSLRRGAQILSKYPNLEIKWIRGNIDTRLEKLQTEDYDAIILAAAGLRRMGWSDDIVTSYLDRDTLLPAIGQGALGIECRSDDEELLTLLSKVHNDEVAKCVTAERTFLAEMDGSCQVPIAGYATISDQKEIEFTGLIMTPDGKERFEYTMNGTDPVELGKTVSNKLKEQGAYEIIKRLNEQH</sequence>
<keyword id="KW-0627">Porphyrin biosynthesis</keyword>
<keyword id="KW-0808">Transferase</keyword>
<proteinExistence type="inferred from homology"/>
<gene>
    <name evidence="1" type="primary">hemC</name>
    <name type="ordered locus">SAS1599</name>
</gene>
<comment type="function">
    <text evidence="1">Tetrapolymerization of the monopyrrole PBG into the hydroxymethylbilane pre-uroporphyrinogen in several discrete steps.</text>
</comment>
<comment type="catalytic activity">
    <reaction evidence="1">
        <text>4 porphobilinogen + H2O = hydroxymethylbilane + 4 NH4(+)</text>
        <dbReference type="Rhea" id="RHEA:13185"/>
        <dbReference type="ChEBI" id="CHEBI:15377"/>
        <dbReference type="ChEBI" id="CHEBI:28938"/>
        <dbReference type="ChEBI" id="CHEBI:57845"/>
        <dbReference type="ChEBI" id="CHEBI:58126"/>
        <dbReference type="EC" id="2.5.1.61"/>
    </reaction>
</comment>
<comment type="cofactor">
    <cofactor evidence="1">
        <name>dipyrromethane</name>
        <dbReference type="ChEBI" id="CHEBI:60342"/>
    </cofactor>
    <text evidence="1">Binds 1 dipyrromethane group covalently.</text>
</comment>
<comment type="pathway">
    <text evidence="1">Porphyrin-containing compound metabolism; protoporphyrin-IX biosynthesis; coproporphyrinogen-III from 5-aminolevulinate: step 2/4.</text>
</comment>
<comment type="subunit">
    <text evidence="1">Monomer.</text>
</comment>
<comment type="miscellaneous">
    <text evidence="1">The porphobilinogen subunits are added to the dipyrromethane group.</text>
</comment>
<comment type="similarity">
    <text evidence="1">Belongs to the HMBS family.</text>
</comment>
<reference key="1">
    <citation type="journal article" date="2004" name="Proc. Natl. Acad. Sci. U.S.A.">
        <title>Complete genomes of two clinical Staphylococcus aureus strains: evidence for the rapid evolution of virulence and drug resistance.</title>
        <authorList>
            <person name="Holden M.T.G."/>
            <person name="Feil E.J."/>
            <person name="Lindsay J.A."/>
            <person name="Peacock S.J."/>
            <person name="Day N.P.J."/>
            <person name="Enright M.C."/>
            <person name="Foster T.J."/>
            <person name="Moore C.E."/>
            <person name="Hurst L."/>
            <person name="Atkin R."/>
            <person name="Barron A."/>
            <person name="Bason N."/>
            <person name="Bentley S.D."/>
            <person name="Chillingworth C."/>
            <person name="Chillingworth T."/>
            <person name="Churcher C."/>
            <person name="Clark L."/>
            <person name="Corton C."/>
            <person name="Cronin A."/>
            <person name="Doggett J."/>
            <person name="Dowd L."/>
            <person name="Feltwell T."/>
            <person name="Hance Z."/>
            <person name="Harris B."/>
            <person name="Hauser H."/>
            <person name="Holroyd S."/>
            <person name="Jagels K."/>
            <person name="James K.D."/>
            <person name="Lennard N."/>
            <person name="Line A."/>
            <person name="Mayes R."/>
            <person name="Moule S."/>
            <person name="Mungall K."/>
            <person name="Ormond D."/>
            <person name="Quail M.A."/>
            <person name="Rabbinowitsch E."/>
            <person name="Rutherford K.M."/>
            <person name="Sanders M."/>
            <person name="Sharp S."/>
            <person name="Simmonds M."/>
            <person name="Stevens K."/>
            <person name="Whitehead S."/>
            <person name="Barrell B.G."/>
            <person name="Spratt B.G."/>
            <person name="Parkhill J."/>
        </authorList>
    </citation>
    <scope>NUCLEOTIDE SEQUENCE [LARGE SCALE GENOMIC DNA]</scope>
    <source>
        <strain>MSSA476</strain>
    </source>
</reference>
<protein>
    <recommendedName>
        <fullName evidence="1">Porphobilinogen deaminase</fullName>
        <shortName evidence="1">PBG</shortName>
        <ecNumber evidence="1">2.5.1.61</ecNumber>
    </recommendedName>
    <alternativeName>
        <fullName evidence="1">Hydroxymethylbilane synthase</fullName>
        <shortName evidence="1">HMBS</shortName>
    </alternativeName>
    <alternativeName>
        <fullName evidence="1">Pre-uroporphyrinogen synthase</fullName>
    </alternativeName>
</protein>
<dbReference type="EC" id="2.5.1.61" evidence="1"/>
<dbReference type="EMBL" id="BX571857">
    <property type="protein sequence ID" value="CAG43401.1"/>
    <property type="molecule type" value="Genomic_DNA"/>
</dbReference>
<dbReference type="RefSeq" id="WP_001230226.1">
    <property type="nucleotide sequence ID" value="NC_002953.3"/>
</dbReference>
<dbReference type="SMR" id="Q6G8Q5"/>
<dbReference type="KEGG" id="sas:SAS1599"/>
<dbReference type="HOGENOM" id="CLU_019704_0_2_9"/>
<dbReference type="UniPathway" id="UPA00251">
    <property type="reaction ID" value="UER00319"/>
</dbReference>
<dbReference type="GO" id="GO:0005737">
    <property type="term" value="C:cytoplasm"/>
    <property type="evidence" value="ECO:0007669"/>
    <property type="project" value="TreeGrafter"/>
</dbReference>
<dbReference type="GO" id="GO:0004418">
    <property type="term" value="F:hydroxymethylbilane synthase activity"/>
    <property type="evidence" value="ECO:0007669"/>
    <property type="project" value="UniProtKB-UniRule"/>
</dbReference>
<dbReference type="GO" id="GO:0006782">
    <property type="term" value="P:protoporphyrinogen IX biosynthetic process"/>
    <property type="evidence" value="ECO:0007669"/>
    <property type="project" value="UniProtKB-UniRule"/>
</dbReference>
<dbReference type="CDD" id="cd13646">
    <property type="entry name" value="PBP2_EcHMBS_like"/>
    <property type="match status" value="1"/>
</dbReference>
<dbReference type="FunFam" id="3.30.160.40:FF:000001">
    <property type="entry name" value="Porphobilinogen deaminase"/>
    <property type="match status" value="1"/>
</dbReference>
<dbReference type="FunFam" id="3.40.190.10:FF:000004">
    <property type="entry name" value="Porphobilinogen deaminase"/>
    <property type="match status" value="1"/>
</dbReference>
<dbReference type="FunFam" id="3.40.190.10:FF:000005">
    <property type="entry name" value="Porphobilinogen deaminase"/>
    <property type="match status" value="1"/>
</dbReference>
<dbReference type="Gene3D" id="3.40.190.10">
    <property type="entry name" value="Periplasmic binding protein-like II"/>
    <property type="match status" value="2"/>
</dbReference>
<dbReference type="Gene3D" id="3.30.160.40">
    <property type="entry name" value="Porphobilinogen deaminase, C-terminal domain"/>
    <property type="match status" value="1"/>
</dbReference>
<dbReference type="HAMAP" id="MF_00260">
    <property type="entry name" value="Porphobil_deam"/>
    <property type="match status" value="1"/>
</dbReference>
<dbReference type="InterPro" id="IPR000860">
    <property type="entry name" value="HemC"/>
</dbReference>
<dbReference type="InterPro" id="IPR022419">
    <property type="entry name" value="Porphobilin_deaminase_cofac_BS"/>
</dbReference>
<dbReference type="InterPro" id="IPR022417">
    <property type="entry name" value="Porphobilin_deaminase_N"/>
</dbReference>
<dbReference type="InterPro" id="IPR022418">
    <property type="entry name" value="Porphobilinogen_deaminase_C"/>
</dbReference>
<dbReference type="InterPro" id="IPR036803">
    <property type="entry name" value="Porphobilinogen_deaminase_C_sf"/>
</dbReference>
<dbReference type="NCBIfam" id="TIGR00212">
    <property type="entry name" value="hemC"/>
    <property type="match status" value="1"/>
</dbReference>
<dbReference type="PANTHER" id="PTHR11557">
    <property type="entry name" value="PORPHOBILINOGEN DEAMINASE"/>
    <property type="match status" value="1"/>
</dbReference>
<dbReference type="PANTHER" id="PTHR11557:SF0">
    <property type="entry name" value="PORPHOBILINOGEN DEAMINASE"/>
    <property type="match status" value="1"/>
</dbReference>
<dbReference type="Pfam" id="PF01379">
    <property type="entry name" value="Porphobil_deam"/>
    <property type="match status" value="1"/>
</dbReference>
<dbReference type="Pfam" id="PF03900">
    <property type="entry name" value="Porphobil_deamC"/>
    <property type="match status" value="1"/>
</dbReference>
<dbReference type="PIRSF" id="PIRSF001438">
    <property type="entry name" value="4pyrrol_synth_OHMeBilane_synth"/>
    <property type="match status" value="1"/>
</dbReference>
<dbReference type="PRINTS" id="PR00151">
    <property type="entry name" value="PORPHBDMNASE"/>
</dbReference>
<dbReference type="SUPFAM" id="SSF53850">
    <property type="entry name" value="Periplasmic binding protein-like II"/>
    <property type="match status" value="1"/>
</dbReference>
<dbReference type="SUPFAM" id="SSF54782">
    <property type="entry name" value="Porphobilinogen deaminase (hydroxymethylbilane synthase), C-terminal domain"/>
    <property type="match status" value="1"/>
</dbReference>
<dbReference type="PROSITE" id="PS00533">
    <property type="entry name" value="PORPHOBILINOGEN_DEAM"/>
    <property type="match status" value="1"/>
</dbReference>
<name>HEM3_STAAS</name>